<keyword id="KW-1185">Reference proteome</keyword>
<comment type="function">
    <text evidence="1">Probably involved in ribonucleotide reductase function.</text>
</comment>
<comment type="similarity">
    <text evidence="2">Belongs to the NrdI family.</text>
</comment>
<accession>P0A773</accession>
<accession>P77025</accession>
<accession>Q47415</accession>
<gene>
    <name type="primary">nrdI</name>
    <name type="ordered locus">c3227</name>
</gene>
<evidence type="ECO:0000250" key="1"/>
<evidence type="ECO:0000305" key="2"/>
<organism>
    <name type="scientific">Escherichia coli O6:H1 (strain CFT073 / ATCC 700928 / UPEC)</name>
    <dbReference type="NCBI Taxonomy" id="199310"/>
    <lineage>
        <taxon>Bacteria</taxon>
        <taxon>Pseudomonadati</taxon>
        <taxon>Pseudomonadota</taxon>
        <taxon>Gammaproteobacteria</taxon>
        <taxon>Enterobacterales</taxon>
        <taxon>Enterobacteriaceae</taxon>
        <taxon>Escherichia</taxon>
    </lineage>
</organism>
<reference key="1">
    <citation type="journal article" date="2002" name="Proc. Natl. Acad. Sci. U.S.A.">
        <title>Extensive mosaic structure revealed by the complete genome sequence of uropathogenic Escherichia coli.</title>
        <authorList>
            <person name="Welch R.A."/>
            <person name="Burland V."/>
            <person name="Plunkett G. III"/>
            <person name="Redford P."/>
            <person name="Roesch P."/>
            <person name="Rasko D."/>
            <person name="Buckles E.L."/>
            <person name="Liou S.-R."/>
            <person name="Boutin A."/>
            <person name="Hackett J."/>
            <person name="Stroud D."/>
            <person name="Mayhew G.F."/>
            <person name="Rose D.J."/>
            <person name="Zhou S."/>
            <person name="Schwartz D.C."/>
            <person name="Perna N.T."/>
            <person name="Mobley H.L.T."/>
            <person name="Donnenberg M.S."/>
            <person name="Blattner F.R."/>
        </authorList>
    </citation>
    <scope>NUCLEOTIDE SEQUENCE [LARGE SCALE GENOMIC DNA]</scope>
    <source>
        <strain>CFT073 / ATCC 700928 / UPEC</strain>
    </source>
</reference>
<sequence>MSQLVYFSSSSENTQRFIERLGLPAVRIPLNERERIQVDEPYILIVPSYGGGGTAGAVPRQVIRFLNDEHNRALLRGVIASGNRNFGEAYGRAGDVIARKCGVPWLYRFELMGTQSDIENVRKGVTEFWQRQPQNA</sequence>
<proteinExistence type="inferred from homology"/>
<dbReference type="EMBL" id="AE014075">
    <property type="protein sequence ID" value="AAN81679.1"/>
    <property type="molecule type" value="Genomic_DNA"/>
</dbReference>
<dbReference type="RefSeq" id="WP_000080947.1">
    <property type="nucleotide sequence ID" value="NZ_CP051263.1"/>
</dbReference>
<dbReference type="SMR" id="P0A773"/>
<dbReference type="STRING" id="199310.c3227"/>
<dbReference type="GeneID" id="75172757"/>
<dbReference type="KEGG" id="ecc:c3227"/>
<dbReference type="eggNOG" id="COG1780">
    <property type="taxonomic scope" value="Bacteria"/>
</dbReference>
<dbReference type="HOGENOM" id="CLU_114845_0_0_6"/>
<dbReference type="BioCyc" id="ECOL199310:C3227-MONOMER"/>
<dbReference type="Proteomes" id="UP000001410">
    <property type="component" value="Chromosome"/>
</dbReference>
<dbReference type="GO" id="GO:0010181">
    <property type="term" value="F:FMN binding"/>
    <property type="evidence" value="ECO:0007669"/>
    <property type="project" value="InterPro"/>
</dbReference>
<dbReference type="GO" id="GO:0036211">
    <property type="term" value="P:protein modification process"/>
    <property type="evidence" value="ECO:0007669"/>
    <property type="project" value="InterPro"/>
</dbReference>
<dbReference type="FunFam" id="3.40.50.360:FF:000005">
    <property type="entry name" value="Protein NrdI"/>
    <property type="match status" value="1"/>
</dbReference>
<dbReference type="Gene3D" id="3.40.50.360">
    <property type="match status" value="1"/>
</dbReference>
<dbReference type="HAMAP" id="MF_00128">
    <property type="entry name" value="NrdI"/>
    <property type="match status" value="1"/>
</dbReference>
<dbReference type="InterPro" id="IPR029039">
    <property type="entry name" value="Flavoprotein-like_sf"/>
</dbReference>
<dbReference type="InterPro" id="IPR020852">
    <property type="entry name" value="RNR_Ib_NrdI_bac"/>
</dbReference>
<dbReference type="InterPro" id="IPR004465">
    <property type="entry name" value="RNR_NrdI"/>
</dbReference>
<dbReference type="NCBIfam" id="TIGR00333">
    <property type="entry name" value="nrdI"/>
    <property type="match status" value="1"/>
</dbReference>
<dbReference type="PANTHER" id="PTHR37297">
    <property type="entry name" value="PROTEIN NRDI"/>
    <property type="match status" value="1"/>
</dbReference>
<dbReference type="PANTHER" id="PTHR37297:SF1">
    <property type="entry name" value="PROTEIN NRDI"/>
    <property type="match status" value="1"/>
</dbReference>
<dbReference type="Pfam" id="PF07972">
    <property type="entry name" value="Flavodoxin_NdrI"/>
    <property type="match status" value="1"/>
</dbReference>
<dbReference type="PIRSF" id="PIRSF005087">
    <property type="entry name" value="NrdI"/>
    <property type="match status" value="1"/>
</dbReference>
<dbReference type="SUPFAM" id="SSF52218">
    <property type="entry name" value="Flavoproteins"/>
    <property type="match status" value="1"/>
</dbReference>
<protein>
    <recommendedName>
        <fullName>Protein NrdI</fullName>
    </recommendedName>
</protein>
<name>NRDI_ECOL6</name>
<feature type="chain" id="PRO_0000164316" description="Protein NrdI">
    <location>
        <begin position="1"/>
        <end position="136"/>
    </location>
</feature>